<dbReference type="EC" id="3.1.-.-" evidence="6"/>
<dbReference type="EMBL" id="DS027692">
    <property type="protein sequence ID" value="EAW20703.1"/>
    <property type="molecule type" value="Genomic_DNA"/>
</dbReference>
<dbReference type="RefSeq" id="XP_001262600.1">
    <property type="nucleotide sequence ID" value="XM_001262599.1"/>
</dbReference>
<dbReference type="SMR" id="A1D8J2"/>
<dbReference type="STRING" id="331117.A1D8J2"/>
<dbReference type="EnsemblFungi" id="EAW20703">
    <property type="protein sequence ID" value="EAW20703"/>
    <property type="gene ID" value="NFIA_112270"/>
</dbReference>
<dbReference type="GeneID" id="4589236"/>
<dbReference type="KEGG" id="nfi:NFIA_112270"/>
<dbReference type="VEuPathDB" id="FungiDB:NFIA_112270"/>
<dbReference type="eggNOG" id="KOG0813">
    <property type="taxonomic scope" value="Eukaryota"/>
</dbReference>
<dbReference type="HOGENOM" id="CLU_048478_1_0_1"/>
<dbReference type="OMA" id="PAKLIVW"/>
<dbReference type="OrthoDB" id="17458at2759"/>
<dbReference type="Proteomes" id="UP000006702">
    <property type="component" value="Unassembled WGS sequence"/>
</dbReference>
<dbReference type="GO" id="GO:0016787">
    <property type="term" value="F:hydrolase activity"/>
    <property type="evidence" value="ECO:0007669"/>
    <property type="project" value="UniProtKB-KW"/>
</dbReference>
<dbReference type="GO" id="GO:0046872">
    <property type="term" value="F:metal ion binding"/>
    <property type="evidence" value="ECO:0007669"/>
    <property type="project" value="UniProtKB-KW"/>
</dbReference>
<dbReference type="GO" id="GO:0044550">
    <property type="term" value="P:secondary metabolite biosynthetic process"/>
    <property type="evidence" value="ECO:0007669"/>
    <property type="project" value="TreeGrafter"/>
</dbReference>
<dbReference type="CDD" id="cd07722">
    <property type="entry name" value="LACTB2-like_MBL-fold"/>
    <property type="match status" value="1"/>
</dbReference>
<dbReference type="FunFam" id="1.10.10.10:FF:001025">
    <property type="entry name" value="Lactamase-like protein nscB"/>
    <property type="match status" value="1"/>
</dbReference>
<dbReference type="FunFam" id="3.60.15.10:FF:000041">
    <property type="entry name" value="Metallo-beta-lactamase domain protein"/>
    <property type="match status" value="1"/>
</dbReference>
<dbReference type="Gene3D" id="3.60.15.10">
    <property type="entry name" value="Ribonuclease Z/Hydroxyacylglutathione hydrolase-like"/>
    <property type="match status" value="1"/>
</dbReference>
<dbReference type="Gene3D" id="1.10.10.10">
    <property type="entry name" value="Winged helix-like DNA-binding domain superfamily/Winged helix DNA-binding domain"/>
    <property type="match status" value="1"/>
</dbReference>
<dbReference type="InterPro" id="IPR047921">
    <property type="entry name" value="LACTB2-like_MBL-fold"/>
</dbReference>
<dbReference type="InterPro" id="IPR001279">
    <property type="entry name" value="Metallo-B-lactamas"/>
</dbReference>
<dbReference type="InterPro" id="IPR036866">
    <property type="entry name" value="RibonucZ/Hydroxyglut_hydro"/>
</dbReference>
<dbReference type="InterPro" id="IPR050662">
    <property type="entry name" value="Sec-metab_biosynth-thioest"/>
</dbReference>
<dbReference type="InterPro" id="IPR036388">
    <property type="entry name" value="WH-like_DNA-bd_sf"/>
</dbReference>
<dbReference type="PANTHER" id="PTHR23131">
    <property type="entry name" value="ENDORIBONUCLEASE LACTB2"/>
    <property type="match status" value="1"/>
</dbReference>
<dbReference type="PANTHER" id="PTHR23131:SF2">
    <property type="entry name" value="LACTAMASE-LIKE PROTEIN APTB-RELATED"/>
    <property type="match status" value="1"/>
</dbReference>
<dbReference type="Pfam" id="PF00753">
    <property type="entry name" value="Lactamase_B"/>
    <property type="match status" value="1"/>
</dbReference>
<dbReference type="SMART" id="SM00849">
    <property type="entry name" value="Lactamase_B"/>
    <property type="match status" value="1"/>
</dbReference>
<dbReference type="SUPFAM" id="SSF56281">
    <property type="entry name" value="Metallo-hydrolase/oxidoreductase"/>
    <property type="match status" value="1"/>
</dbReference>
<keyword id="KW-0378">Hydrolase</keyword>
<keyword id="KW-0479">Metal-binding</keyword>
<keyword id="KW-1185">Reference proteome</keyword>
<keyword id="KW-0862">Zinc</keyword>
<evidence type="ECO:0000250" key="1">
    <source>
        <dbReference type="UniProtKB" id="Q988B9"/>
    </source>
</evidence>
<evidence type="ECO:0000255" key="2"/>
<evidence type="ECO:0000269" key="3">
    <source>
    </source>
</evidence>
<evidence type="ECO:0000303" key="4">
    <source>
    </source>
</evidence>
<evidence type="ECO:0000305" key="5"/>
<evidence type="ECO:0000305" key="6">
    <source>
    </source>
</evidence>
<evidence type="ECO:0000305" key="7">
    <source>
    </source>
</evidence>
<organism>
    <name type="scientific">Neosartorya fischeri (strain ATCC 1020 / DSM 3700 / CBS 544.65 / FGSC A1164 / JCM 1740 / NRRL 181 / WB 181)</name>
    <name type="common">Aspergillus fischerianus</name>
    <dbReference type="NCBI Taxonomy" id="331117"/>
    <lineage>
        <taxon>Eukaryota</taxon>
        <taxon>Fungi</taxon>
        <taxon>Dikarya</taxon>
        <taxon>Ascomycota</taxon>
        <taxon>Pezizomycotina</taxon>
        <taxon>Eurotiomycetes</taxon>
        <taxon>Eurotiomycetidae</taxon>
        <taxon>Eurotiales</taxon>
        <taxon>Aspergillaceae</taxon>
        <taxon>Aspergillus</taxon>
        <taxon>Aspergillus subgen. Fumigati</taxon>
    </lineage>
</organism>
<sequence>MALRMPFNQAFWEEYLSGQDATLPSLPDTSTLSSRVIRILGGNPGAMHLQGTNTYLVGTGPSRILIDTGQGLPIWLSRIVGVLHSNNISISHILLTHWHGDHTGGVPDLISYNPTLGEHVYKNLPDAGQKPIEDGQIFAVEGATVRAVFTPGHSVDHMCFLLEEENALFTGDNVLGHGFSVAPDLGRYMESLELMAGLGCVLGYPAHGAVIGDLPSKLEEYIRHKEMRVQGILSVLVKERERVEGDRGTEGRRKGGMTLHEIARAMFGTVPDEVIDQAMAPFLMQALWKLTEDRKVGFEPGDPVKRKWFAVARRKTKPPRQHGSVARQ</sequence>
<feature type="chain" id="PRO_0000437897" description="Lactamase-like protein nscB">
    <location>
        <begin position="1"/>
        <end position="328"/>
    </location>
</feature>
<feature type="active site" description="Proton donor/acceptor" evidence="2">
    <location>
        <position position="101"/>
    </location>
</feature>
<feature type="binding site" evidence="1">
    <location>
        <position position="97"/>
    </location>
    <ligand>
        <name>Zn(2+)</name>
        <dbReference type="ChEBI" id="CHEBI:29105"/>
        <label>1</label>
        <note>catalytic</note>
    </ligand>
</feature>
<feature type="binding site" evidence="1">
    <location>
        <position position="99"/>
    </location>
    <ligand>
        <name>Zn(2+)</name>
        <dbReference type="ChEBI" id="CHEBI:29105"/>
        <label>1</label>
        <note>catalytic</note>
    </ligand>
</feature>
<feature type="binding site" evidence="1">
    <location>
        <position position="101"/>
    </location>
    <ligand>
        <name>Zn(2+)</name>
        <dbReference type="ChEBI" id="CHEBI:29105"/>
        <label>2</label>
        <note>catalytic</note>
    </ligand>
</feature>
<feature type="binding site" evidence="1">
    <location>
        <position position="102"/>
    </location>
    <ligand>
        <name>Zn(2+)</name>
        <dbReference type="ChEBI" id="CHEBI:29105"/>
        <label>2</label>
        <note>catalytic</note>
    </ligand>
</feature>
<accession>A1D8J2</accession>
<reference key="1">
    <citation type="journal article" date="2008" name="PLoS Genet.">
        <title>Genomic islands in the pathogenic filamentous fungus Aspergillus fumigatus.</title>
        <authorList>
            <person name="Fedorova N.D."/>
            <person name="Khaldi N."/>
            <person name="Joardar V.S."/>
            <person name="Maiti R."/>
            <person name="Amedeo P."/>
            <person name="Anderson M.J."/>
            <person name="Crabtree J."/>
            <person name="Silva J.C."/>
            <person name="Badger J.H."/>
            <person name="Albarraq A."/>
            <person name="Angiuoli S."/>
            <person name="Bussey H."/>
            <person name="Bowyer P."/>
            <person name="Cotty P.J."/>
            <person name="Dyer P.S."/>
            <person name="Egan A."/>
            <person name="Galens K."/>
            <person name="Fraser-Liggett C.M."/>
            <person name="Haas B.J."/>
            <person name="Inman J.M."/>
            <person name="Kent R."/>
            <person name="Lemieux S."/>
            <person name="Malavazi I."/>
            <person name="Orvis J."/>
            <person name="Roemer T."/>
            <person name="Ronning C.M."/>
            <person name="Sundaram J.P."/>
            <person name="Sutton G."/>
            <person name="Turner G."/>
            <person name="Venter J.C."/>
            <person name="White O.R."/>
            <person name="Whitty B.R."/>
            <person name="Youngman P."/>
            <person name="Wolfe K.H."/>
            <person name="Goldman G.H."/>
            <person name="Wortman J.R."/>
            <person name="Jiang B."/>
            <person name="Denning D.W."/>
            <person name="Nierman W.C."/>
        </authorList>
    </citation>
    <scope>NUCLEOTIDE SEQUENCE [LARGE SCALE GENOMIC DNA]</scope>
    <source>
        <strain>ATCC 1020 / DSM 3700 / CBS 544.65 / FGSC A1164 / JCM 1740 / NRRL 181 / WB 181</strain>
    </source>
</reference>
<reference key="2">
    <citation type="journal article" date="2013" name="ACS Synth. Biol.">
        <title>Discovery of cryptic polyketide metabolites from dermatophytes using heterologous expression in Aspergillus nidulans.</title>
        <authorList>
            <person name="Yin W.B."/>
            <person name="Chooi Y.H."/>
            <person name="Smith A.R."/>
            <person name="Cacho R.A."/>
            <person name="Hu Y."/>
            <person name="White T.C."/>
            <person name="Tang Y."/>
        </authorList>
    </citation>
    <scope>FUNCTION</scope>
</reference>
<reference key="3">
    <citation type="journal article" date="2013" name="Org. Lett.">
        <title>Genome mining of a prenylated and immunosuppressive polyketide from pathogenic fungi.</title>
        <authorList>
            <person name="Chooi Y.H."/>
            <person name="Fang J."/>
            <person name="Liu H."/>
            <person name="Filler S.G."/>
            <person name="Wang P."/>
            <person name="Tang Y."/>
        </authorList>
    </citation>
    <scope>FUNCTION</scope>
</reference>
<gene>
    <name evidence="4" type="primary">nscB</name>
    <name type="ORF">NFIA_112270</name>
</gene>
<proteinExistence type="inferred from homology"/>
<name>NSCB_NEOFI</name>
<comment type="function">
    <text evidence="3 7">Lactamase-like protein; part of the gene cluster that mediates the biosynthesis of neosartoricin, a prenylated anthracenone that exhibits T-cell antiproliferative activity, suggestive of a physiological role as an immunosuppressive agent (PubMed:23368997, PubMed:23758576). The non-reducing polyketide synthase nscA probably synthesizes and cyclizes the decaketide backbone (PubMed:23368997). The hydrolase nscB then mediates the product release through hydrolysis followed by spontaneous decarboxylation (PubMed:23368997). The prenyltransferase nscD catalyzes the addition of the dimethylallyl group to the aromatic C5 (PubMed:23368997). The FAD-dependent monooxygenase nscC is then responsible for the stereospecific hydroxylation at C2 (PubMed:23368997). There is no gene encoding O-acetyltransferase in the nsc gene cluster; thus, the last step of 2-O-acetylation leading to neosartoricin may be catalyzed by an unidentified O-acetyltransferase (PubMed:23368997).</text>
</comment>
<comment type="cofactor">
    <cofactor evidence="1">
        <name>Zn(2+)</name>
        <dbReference type="ChEBI" id="CHEBI:29105"/>
    </cofactor>
    <text evidence="1">Binds 2 Zn(2+) ions per subunit.</text>
</comment>
<comment type="pathway">
    <text evidence="3">Secondary metabolite biosynthesis.</text>
</comment>
<comment type="similarity">
    <text evidence="5">Belongs to the metallo-beta-lactamase superfamily.</text>
</comment>
<protein>
    <recommendedName>
        <fullName evidence="4">Lactamase-like protein nscB</fullName>
        <ecNumber evidence="6">3.1.-.-</ecNumber>
    </recommendedName>
    <alternativeName>
        <fullName evidence="4">Neosartoricin biosynthesis protein B</fullName>
    </alternativeName>
</protein>